<feature type="chain" id="PRO_1000073834" description="Argininosuccinate synthase">
    <location>
        <begin position="1"/>
        <end position="401"/>
    </location>
</feature>
<feature type="binding site" evidence="1">
    <location>
        <begin position="8"/>
        <end position="16"/>
    </location>
    <ligand>
        <name>ATP</name>
        <dbReference type="ChEBI" id="CHEBI:30616"/>
    </ligand>
</feature>
<feature type="binding site" evidence="1">
    <location>
        <position position="85"/>
    </location>
    <ligand>
        <name>L-citrulline</name>
        <dbReference type="ChEBI" id="CHEBI:57743"/>
    </ligand>
</feature>
<feature type="binding site" evidence="1">
    <location>
        <position position="115"/>
    </location>
    <ligand>
        <name>ATP</name>
        <dbReference type="ChEBI" id="CHEBI:30616"/>
    </ligand>
</feature>
<feature type="binding site" evidence="1">
    <location>
        <position position="117"/>
    </location>
    <ligand>
        <name>L-aspartate</name>
        <dbReference type="ChEBI" id="CHEBI:29991"/>
    </ligand>
</feature>
<feature type="binding site" evidence="1">
    <location>
        <position position="121"/>
    </location>
    <ligand>
        <name>L-aspartate</name>
        <dbReference type="ChEBI" id="CHEBI:29991"/>
    </ligand>
</feature>
<feature type="binding site" evidence="1">
    <location>
        <position position="121"/>
    </location>
    <ligand>
        <name>L-citrulline</name>
        <dbReference type="ChEBI" id="CHEBI:57743"/>
    </ligand>
</feature>
<feature type="binding site" evidence="1">
    <location>
        <position position="122"/>
    </location>
    <ligand>
        <name>L-aspartate</name>
        <dbReference type="ChEBI" id="CHEBI:29991"/>
    </ligand>
</feature>
<feature type="binding site" evidence="1">
    <location>
        <position position="125"/>
    </location>
    <ligand>
        <name>L-citrulline</name>
        <dbReference type="ChEBI" id="CHEBI:57743"/>
    </ligand>
</feature>
<feature type="binding site" evidence="1">
    <location>
        <position position="173"/>
    </location>
    <ligand>
        <name>L-citrulline</name>
        <dbReference type="ChEBI" id="CHEBI:57743"/>
    </ligand>
</feature>
<feature type="binding site" evidence="1">
    <location>
        <position position="258"/>
    </location>
    <ligand>
        <name>L-citrulline</name>
        <dbReference type="ChEBI" id="CHEBI:57743"/>
    </ligand>
</feature>
<feature type="binding site" evidence="1">
    <location>
        <position position="270"/>
    </location>
    <ligand>
        <name>L-citrulline</name>
        <dbReference type="ChEBI" id="CHEBI:57743"/>
    </ligand>
</feature>
<organism>
    <name type="scientific">Staphylococcus aureus (strain JH9)</name>
    <dbReference type="NCBI Taxonomy" id="359786"/>
    <lineage>
        <taxon>Bacteria</taxon>
        <taxon>Bacillati</taxon>
        <taxon>Bacillota</taxon>
        <taxon>Bacilli</taxon>
        <taxon>Bacillales</taxon>
        <taxon>Staphylococcaceae</taxon>
        <taxon>Staphylococcus</taxon>
    </lineage>
</organism>
<name>ASSY_STAA9</name>
<accession>A5IRD9</accession>
<keyword id="KW-0028">Amino-acid biosynthesis</keyword>
<keyword id="KW-0055">Arginine biosynthesis</keyword>
<keyword id="KW-0067">ATP-binding</keyword>
<keyword id="KW-0963">Cytoplasm</keyword>
<keyword id="KW-0436">Ligase</keyword>
<keyword id="KW-0547">Nucleotide-binding</keyword>
<proteinExistence type="inferred from homology"/>
<gene>
    <name evidence="1" type="primary">argG</name>
    <name type="ordered locus">SaurJH9_0961</name>
</gene>
<protein>
    <recommendedName>
        <fullName evidence="1">Argininosuccinate synthase</fullName>
        <ecNumber evidence="1">6.3.4.5</ecNumber>
    </recommendedName>
    <alternativeName>
        <fullName evidence="1">Citrulline--aspartate ligase</fullName>
    </alternativeName>
</protein>
<dbReference type="EC" id="6.3.4.5" evidence="1"/>
<dbReference type="EMBL" id="CP000703">
    <property type="protein sequence ID" value="ABQ48762.1"/>
    <property type="molecule type" value="Genomic_DNA"/>
</dbReference>
<dbReference type="RefSeq" id="WP_000660045.1">
    <property type="nucleotide sequence ID" value="NC_009487.1"/>
</dbReference>
<dbReference type="SMR" id="A5IRD9"/>
<dbReference type="KEGG" id="saj:SaurJH9_0961"/>
<dbReference type="HOGENOM" id="CLU_032784_4_2_9"/>
<dbReference type="UniPathway" id="UPA00068">
    <property type="reaction ID" value="UER00113"/>
</dbReference>
<dbReference type="GO" id="GO:0005737">
    <property type="term" value="C:cytoplasm"/>
    <property type="evidence" value="ECO:0007669"/>
    <property type="project" value="UniProtKB-SubCell"/>
</dbReference>
<dbReference type="GO" id="GO:0004055">
    <property type="term" value="F:argininosuccinate synthase activity"/>
    <property type="evidence" value="ECO:0007669"/>
    <property type="project" value="UniProtKB-UniRule"/>
</dbReference>
<dbReference type="GO" id="GO:0005524">
    <property type="term" value="F:ATP binding"/>
    <property type="evidence" value="ECO:0007669"/>
    <property type="project" value="UniProtKB-UniRule"/>
</dbReference>
<dbReference type="GO" id="GO:0000053">
    <property type="term" value="P:argininosuccinate metabolic process"/>
    <property type="evidence" value="ECO:0007669"/>
    <property type="project" value="TreeGrafter"/>
</dbReference>
<dbReference type="GO" id="GO:0006526">
    <property type="term" value="P:L-arginine biosynthetic process"/>
    <property type="evidence" value="ECO:0007669"/>
    <property type="project" value="UniProtKB-UniRule"/>
</dbReference>
<dbReference type="GO" id="GO:0000050">
    <property type="term" value="P:urea cycle"/>
    <property type="evidence" value="ECO:0007669"/>
    <property type="project" value="TreeGrafter"/>
</dbReference>
<dbReference type="CDD" id="cd01999">
    <property type="entry name" value="ASS"/>
    <property type="match status" value="1"/>
</dbReference>
<dbReference type="FunFam" id="1.20.5.470:FF:000002">
    <property type="entry name" value="Argininosuccinate synthase"/>
    <property type="match status" value="1"/>
</dbReference>
<dbReference type="FunFam" id="3.40.50.620:FF:000038">
    <property type="entry name" value="Argininosuccinate synthase"/>
    <property type="match status" value="1"/>
</dbReference>
<dbReference type="FunFam" id="3.90.1260.10:FF:000007">
    <property type="entry name" value="Argininosuccinate synthase"/>
    <property type="match status" value="1"/>
</dbReference>
<dbReference type="Gene3D" id="3.90.1260.10">
    <property type="entry name" value="Argininosuccinate synthetase, chain A, domain 2"/>
    <property type="match status" value="1"/>
</dbReference>
<dbReference type="Gene3D" id="3.40.50.620">
    <property type="entry name" value="HUPs"/>
    <property type="match status" value="1"/>
</dbReference>
<dbReference type="Gene3D" id="1.20.5.470">
    <property type="entry name" value="Single helix bin"/>
    <property type="match status" value="1"/>
</dbReference>
<dbReference type="HAMAP" id="MF_00005">
    <property type="entry name" value="Arg_succ_synth_type1"/>
    <property type="match status" value="1"/>
</dbReference>
<dbReference type="InterPro" id="IPR048268">
    <property type="entry name" value="Arginosuc_syn_C"/>
</dbReference>
<dbReference type="InterPro" id="IPR048267">
    <property type="entry name" value="Arginosuc_syn_N"/>
</dbReference>
<dbReference type="InterPro" id="IPR001518">
    <property type="entry name" value="Arginosuc_synth"/>
</dbReference>
<dbReference type="InterPro" id="IPR018223">
    <property type="entry name" value="Arginosuc_synth_CS"/>
</dbReference>
<dbReference type="InterPro" id="IPR023434">
    <property type="entry name" value="Arginosuc_synth_type_1_subfam"/>
</dbReference>
<dbReference type="InterPro" id="IPR024074">
    <property type="entry name" value="AS_cat/multimer_dom_body"/>
</dbReference>
<dbReference type="InterPro" id="IPR014729">
    <property type="entry name" value="Rossmann-like_a/b/a_fold"/>
</dbReference>
<dbReference type="NCBIfam" id="TIGR00032">
    <property type="entry name" value="argG"/>
    <property type="match status" value="1"/>
</dbReference>
<dbReference type="NCBIfam" id="NF001770">
    <property type="entry name" value="PRK00509.1"/>
    <property type="match status" value="1"/>
</dbReference>
<dbReference type="PANTHER" id="PTHR11587">
    <property type="entry name" value="ARGININOSUCCINATE SYNTHASE"/>
    <property type="match status" value="1"/>
</dbReference>
<dbReference type="PANTHER" id="PTHR11587:SF2">
    <property type="entry name" value="ARGININOSUCCINATE SYNTHASE"/>
    <property type="match status" value="1"/>
</dbReference>
<dbReference type="Pfam" id="PF20979">
    <property type="entry name" value="Arginosuc_syn_C"/>
    <property type="match status" value="1"/>
</dbReference>
<dbReference type="Pfam" id="PF00764">
    <property type="entry name" value="Arginosuc_synth"/>
    <property type="match status" value="1"/>
</dbReference>
<dbReference type="SUPFAM" id="SSF52402">
    <property type="entry name" value="Adenine nucleotide alpha hydrolases-like"/>
    <property type="match status" value="1"/>
</dbReference>
<dbReference type="SUPFAM" id="SSF69864">
    <property type="entry name" value="Argininosuccinate synthetase, C-terminal domain"/>
    <property type="match status" value="1"/>
</dbReference>
<dbReference type="PROSITE" id="PS00564">
    <property type="entry name" value="ARGININOSUCCIN_SYN_1"/>
    <property type="match status" value="1"/>
</dbReference>
<dbReference type="PROSITE" id="PS00565">
    <property type="entry name" value="ARGININOSUCCIN_SYN_2"/>
    <property type="match status" value="1"/>
</dbReference>
<comment type="catalytic activity">
    <reaction evidence="1">
        <text>L-citrulline + L-aspartate + ATP = 2-(N(omega)-L-arginino)succinate + AMP + diphosphate + H(+)</text>
        <dbReference type="Rhea" id="RHEA:10932"/>
        <dbReference type="ChEBI" id="CHEBI:15378"/>
        <dbReference type="ChEBI" id="CHEBI:29991"/>
        <dbReference type="ChEBI" id="CHEBI:30616"/>
        <dbReference type="ChEBI" id="CHEBI:33019"/>
        <dbReference type="ChEBI" id="CHEBI:57472"/>
        <dbReference type="ChEBI" id="CHEBI:57743"/>
        <dbReference type="ChEBI" id="CHEBI:456215"/>
        <dbReference type="EC" id="6.3.4.5"/>
    </reaction>
</comment>
<comment type="pathway">
    <text evidence="1">Amino-acid biosynthesis; L-arginine biosynthesis; L-arginine from L-ornithine and carbamoyl phosphate: step 2/3.</text>
</comment>
<comment type="subunit">
    <text evidence="1">Homotetramer.</text>
</comment>
<comment type="subcellular location">
    <subcellularLocation>
        <location evidence="1">Cytoplasm</location>
    </subcellularLocation>
</comment>
<comment type="similarity">
    <text evidence="1">Belongs to the argininosuccinate synthase family. Type 1 subfamily.</text>
</comment>
<sequence>MKEKIVLAYSGGLDTSVAVQWLIDKGYDVVACCLDVGEGKDLDIVYKKALDMGAVECHIIDATKEFSDEYVSYAIKGNLMYENAYPLVSALSRPLIAKKLVEIAEKTNSVGIAHGCTGKGNDQVRFEVAIKALNPSLKAFAPVREWAWSREEEIDYAIKHNIPVSINHDSPYSIDQNLWGRANECGILEDPYAAPPEDAFDLTNALEETPDTADEIILTFDKGIPVQIDGKTYELDDLILTLNALAGKHGIGRIDHVENRLVGIKSREIYEAPAAEVILKAHKALETITLTKDVAHFKPIIEKQFAEQLYNGLWFSPLTDSLKLFIDSTQQYVSGDVRIKLFKGNAIVNGRKSPYTLYDEKLATYTKEDAFNQDAAVGFIDIYGLPTQVNAMLHGGYSNEQ</sequence>
<evidence type="ECO:0000255" key="1">
    <source>
        <dbReference type="HAMAP-Rule" id="MF_00005"/>
    </source>
</evidence>
<reference key="1">
    <citation type="submission" date="2007-05" db="EMBL/GenBank/DDBJ databases">
        <title>Complete sequence of chromosome of Staphylococcus aureus subsp. aureus JH9.</title>
        <authorList>
            <consortium name="US DOE Joint Genome Institute"/>
            <person name="Copeland A."/>
            <person name="Lucas S."/>
            <person name="Lapidus A."/>
            <person name="Barry K."/>
            <person name="Detter J.C."/>
            <person name="Glavina del Rio T."/>
            <person name="Hammon N."/>
            <person name="Israni S."/>
            <person name="Pitluck S."/>
            <person name="Chain P."/>
            <person name="Malfatti S."/>
            <person name="Shin M."/>
            <person name="Vergez L."/>
            <person name="Schmutz J."/>
            <person name="Larimer F."/>
            <person name="Land M."/>
            <person name="Hauser L."/>
            <person name="Kyrpides N."/>
            <person name="Kim E."/>
            <person name="Tomasz A."/>
            <person name="Richardson P."/>
        </authorList>
    </citation>
    <scope>NUCLEOTIDE SEQUENCE [LARGE SCALE GENOMIC DNA]</scope>
    <source>
        <strain>JH9</strain>
    </source>
</reference>